<name>SPN1_BOVIN</name>
<evidence type="ECO:0000250" key="1">
    <source>
        <dbReference type="UniProtKB" id="O95149"/>
    </source>
</evidence>
<evidence type="ECO:0000255" key="2">
    <source>
        <dbReference type="PROSITE-ProRule" id="PRU00561"/>
    </source>
</evidence>
<evidence type="ECO:0000256" key="3">
    <source>
        <dbReference type="SAM" id="MobiDB-lite"/>
    </source>
</evidence>
<evidence type="ECO:0000305" key="4"/>
<organism>
    <name type="scientific">Bos taurus</name>
    <name type="common">Bovine</name>
    <dbReference type="NCBI Taxonomy" id="9913"/>
    <lineage>
        <taxon>Eukaryota</taxon>
        <taxon>Metazoa</taxon>
        <taxon>Chordata</taxon>
        <taxon>Craniata</taxon>
        <taxon>Vertebrata</taxon>
        <taxon>Euteleostomi</taxon>
        <taxon>Mammalia</taxon>
        <taxon>Eutheria</taxon>
        <taxon>Laurasiatheria</taxon>
        <taxon>Artiodactyla</taxon>
        <taxon>Ruminantia</taxon>
        <taxon>Pecora</taxon>
        <taxon>Bovidae</taxon>
        <taxon>Bovinae</taxon>
        <taxon>Bos</taxon>
    </lineage>
</organism>
<reference key="1">
    <citation type="submission" date="2005-11" db="EMBL/GenBank/DDBJ databases">
        <authorList>
            <consortium name="NIH - Mammalian Gene Collection (MGC) project"/>
        </authorList>
    </citation>
    <scope>NUCLEOTIDE SEQUENCE [LARGE SCALE MRNA]</scope>
    <source>
        <strain>Crossbred X Angus</strain>
        <tissue>Liver</tissue>
    </source>
</reference>
<protein>
    <recommendedName>
        <fullName>Snurportin-1</fullName>
    </recommendedName>
    <alternativeName>
        <fullName>RNA U transporter 1</fullName>
    </alternativeName>
</protein>
<comment type="function">
    <text evidence="1">Functions as an U snRNP-specific nuclear import adapter. Involved in the trimethylguanosine (m3G)-cap-dependent nuclear import of U snRNPs. Binds specifically to the terminal m3G-cap U snRNAs.</text>
</comment>
<comment type="subunit">
    <text evidence="1">Component of an import snRNP complex composed of KPNB1, SNUPN, SMN1 and ZNF259. Component of a nuclear export receptor complex composed of KPNB1, Ran, SNUPN and XPO1. Found in a trimeric export complex with SNUPN, Ran and XPO1. Interacts (via IBB domain) with KPNB1; the interaction is direct. Interacts with DDX20, IPO7, SMN1, SNRPB and XPO1. Interacts directly with XPO1. Its interaction with XPO1 and binding to m3G-cap U snRNPs appears to be mutually exclusive. Can form homomers.</text>
</comment>
<comment type="subcellular location">
    <subcellularLocation>
        <location evidence="1">Nucleus</location>
    </subcellularLocation>
    <subcellularLocation>
        <location evidence="1">Cytoplasm</location>
    </subcellularLocation>
    <text evidence="1">Nucleoplasmic shuttling protein. Its nuclear import involves the nucleocytoplasmic transport receptor importin beta. It is re-exported to the cytoplasm by the XPO1-dependent nuclear export receptor pathway.</text>
</comment>
<comment type="similarity">
    <text evidence="4">Belongs to the snurportin family.</text>
</comment>
<sequence>MEELSQALAGSFSVSQDLNSTAAPHPRLSQYKSKYSSLEQSERRRQLLELQKLKRLDYVNHARRLAEDDWTGMESEEEEEKKDDEEMDVDTGKELPKRYANQLMLSEWLIDVPSDLGQEWIVVVCPVGKRSLIVASQGLTSAYTKSGYCVNTFPSLLPGGNRRNSTTEKDYTILDCIYSEVNQTYYVLDVMCWRGHPFYDCQTDFRFYWLHSKLPEEEGLGEKTKRNPFKFVGLKNFPCTPESLCKVLSMDFPFEVDGLLFYHKQTHYSPGSTPLVGWLRPYMVSDVLGVAVPACPLTTKPEYAGYQLQQIIEHKKSKKEGIMGKLTPRASENGHYELEHLSTPKLKSPPQRPNHPESLMEN</sequence>
<feature type="chain" id="PRO_0000247291" description="Snurportin-1">
    <location>
        <begin position="1"/>
        <end position="362"/>
    </location>
</feature>
<feature type="domain" description="IBB" evidence="2">
    <location>
        <begin position="11"/>
        <end position="73"/>
    </location>
</feature>
<feature type="region of interest" description="Necessary for interaction with XPO1" evidence="1">
    <location>
        <begin position="1"/>
        <end position="160"/>
    </location>
</feature>
<feature type="region of interest" description="Necessary for interaction with KPNB1 and m3G-cap U1 and U5 snRNP import receptor activity" evidence="1">
    <location>
        <begin position="1"/>
        <end position="65"/>
    </location>
</feature>
<feature type="region of interest" description="Disordered" evidence="3">
    <location>
        <begin position="1"/>
        <end position="40"/>
    </location>
</feature>
<feature type="region of interest" description="Disordered" evidence="3">
    <location>
        <begin position="69"/>
        <end position="90"/>
    </location>
</feature>
<feature type="region of interest" description="Interaction with m3G-cap structure" evidence="1">
    <location>
        <begin position="128"/>
        <end position="130"/>
    </location>
</feature>
<feature type="region of interest" description="Necessary for binding to the m3G-cap structure" evidence="1">
    <location>
        <begin position="210"/>
        <end position="330"/>
    </location>
</feature>
<feature type="region of interest" description="Disordered" evidence="3">
    <location>
        <begin position="319"/>
        <end position="362"/>
    </location>
</feature>
<feature type="compositionally biased region" description="Polar residues" evidence="3">
    <location>
        <begin position="12"/>
        <end position="22"/>
    </location>
</feature>
<feature type="compositionally biased region" description="Acidic residues" evidence="3">
    <location>
        <begin position="69"/>
        <end position="89"/>
    </location>
</feature>
<feature type="compositionally biased region" description="Basic and acidic residues" evidence="3">
    <location>
        <begin position="332"/>
        <end position="342"/>
    </location>
</feature>
<feature type="site" description="Interaction with m3G-cap structure" evidence="1">
    <location>
        <position position="106"/>
    </location>
</feature>
<feature type="site" description="Interaction with m3G-cap structure" evidence="1">
    <location>
        <position position="145"/>
    </location>
</feature>
<feature type="site" description="Interaction with m3G-cap structure" evidence="1">
    <location>
        <position position="278"/>
    </location>
</feature>
<feature type="modified residue" description="N-acetylmethionine" evidence="1">
    <location>
        <position position="1"/>
    </location>
</feature>
<feature type="modified residue" description="Phosphoserine" evidence="1">
    <location>
        <position position="75"/>
    </location>
</feature>
<accession>Q2TBK8</accession>
<proteinExistence type="evidence at transcript level"/>
<dbReference type="EMBL" id="BC109999">
    <property type="protein sequence ID" value="AAI10000.1"/>
    <property type="molecule type" value="mRNA"/>
</dbReference>
<dbReference type="RefSeq" id="NP_001033635.1">
    <property type="nucleotide sequence ID" value="NM_001038546.2"/>
</dbReference>
<dbReference type="RefSeq" id="XP_005222006.1">
    <property type="nucleotide sequence ID" value="XM_005221949.3"/>
</dbReference>
<dbReference type="RefSeq" id="XP_010815368.1">
    <property type="nucleotide sequence ID" value="XM_010817066.4"/>
</dbReference>
<dbReference type="RefSeq" id="XP_010815369.1">
    <property type="nucleotide sequence ID" value="XM_010817067.4"/>
</dbReference>
<dbReference type="RefSeq" id="XP_024837528.1">
    <property type="nucleotide sequence ID" value="XM_024981760.2"/>
</dbReference>
<dbReference type="RefSeq" id="XP_059735037.1">
    <property type="nucleotide sequence ID" value="XM_059879054.1"/>
</dbReference>
<dbReference type="SMR" id="Q2TBK8"/>
<dbReference type="FunCoup" id="Q2TBK8">
    <property type="interactions" value="5069"/>
</dbReference>
<dbReference type="STRING" id="9913.ENSBTAP00000067932"/>
<dbReference type="PaxDb" id="9913-ENSBTAP00000028371"/>
<dbReference type="Ensembl" id="ENSBTAT00000028371.4">
    <property type="protein sequence ID" value="ENSBTAP00000028371.3"/>
    <property type="gene ID" value="ENSBTAG00000021293.5"/>
</dbReference>
<dbReference type="GeneID" id="515588"/>
<dbReference type="KEGG" id="bta:515588"/>
<dbReference type="CTD" id="10073"/>
<dbReference type="VEuPathDB" id="HostDB:ENSBTAG00000021293"/>
<dbReference type="VGNC" id="VGNC:35088">
    <property type="gene designation" value="SNUPN"/>
</dbReference>
<dbReference type="eggNOG" id="KOG3132">
    <property type="taxonomic scope" value="Eukaryota"/>
</dbReference>
<dbReference type="GeneTree" id="ENSGT00510000047494"/>
<dbReference type="HOGENOM" id="CLU_056809_0_0_1"/>
<dbReference type="InParanoid" id="Q2TBK8"/>
<dbReference type="OMA" id="ENWIMVP"/>
<dbReference type="OrthoDB" id="10003593at2759"/>
<dbReference type="TreeFam" id="TF313108"/>
<dbReference type="Reactome" id="R-BTA-191859">
    <property type="pathway name" value="snRNP Assembly"/>
</dbReference>
<dbReference type="Proteomes" id="UP000009136">
    <property type="component" value="Chromosome 21"/>
</dbReference>
<dbReference type="Bgee" id="ENSBTAG00000021293">
    <property type="expression patterns" value="Expressed in spermatid and 104 other cell types or tissues"/>
</dbReference>
<dbReference type="GO" id="GO:0005829">
    <property type="term" value="C:cytosol"/>
    <property type="evidence" value="ECO:0007669"/>
    <property type="project" value="Ensembl"/>
</dbReference>
<dbReference type="GO" id="GO:0042564">
    <property type="term" value="C:NLS-dependent protein nuclear import complex"/>
    <property type="evidence" value="ECO:0007669"/>
    <property type="project" value="Ensembl"/>
</dbReference>
<dbReference type="GO" id="GO:0005654">
    <property type="term" value="C:nucleoplasm"/>
    <property type="evidence" value="ECO:0007669"/>
    <property type="project" value="Ensembl"/>
</dbReference>
<dbReference type="GO" id="GO:0005634">
    <property type="term" value="C:nucleus"/>
    <property type="evidence" value="ECO:0000250"/>
    <property type="project" value="UniProtKB"/>
</dbReference>
<dbReference type="GO" id="GO:0005886">
    <property type="term" value="C:plasma membrane"/>
    <property type="evidence" value="ECO:0007669"/>
    <property type="project" value="Ensembl"/>
</dbReference>
<dbReference type="GO" id="GO:0061608">
    <property type="term" value="F:nuclear import signal receptor activity"/>
    <property type="evidence" value="ECO:0007669"/>
    <property type="project" value="InterPro"/>
</dbReference>
<dbReference type="GO" id="GO:0003723">
    <property type="term" value="F:RNA binding"/>
    <property type="evidence" value="ECO:0007669"/>
    <property type="project" value="UniProtKB-KW"/>
</dbReference>
<dbReference type="GO" id="GO:0007010">
    <property type="term" value="P:cytoskeleton organization"/>
    <property type="evidence" value="ECO:0000250"/>
    <property type="project" value="UniProtKB"/>
</dbReference>
<dbReference type="GO" id="GO:0051259">
    <property type="term" value="P:protein complex oligomerization"/>
    <property type="evidence" value="ECO:0000250"/>
    <property type="project" value="UniProtKB"/>
</dbReference>
<dbReference type="GO" id="GO:0006606">
    <property type="term" value="P:protein import into nucleus"/>
    <property type="evidence" value="ECO:0007669"/>
    <property type="project" value="InterPro"/>
</dbReference>
<dbReference type="GO" id="GO:0051262">
    <property type="term" value="P:protein tetramerization"/>
    <property type="evidence" value="ECO:0000250"/>
    <property type="project" value="UniProtKB"/>
</dbReference>
<dbReference type="GO" id="GO:0006404">
    <property type="term" value="P:RNA import into nucleus"/>
    <property type="evidence" value="ECO:0000250"/>
    <property type="project" value="UniProtKB"/>
</dbReference>
<dbReference type="GO" id="GO:0061015">
    <property type="term" value="P:snRNA import into nucleus"/>
    <property type="evidence" value="ECO:0007669"/>
    <property type="project" value="InterPro"/>
</dbReference>
<dbReference type="CDD" id="cd09232">
    <property type="entry name" value="Snurportin-1_C"/>
    <property type="match status" value="1"/>
</dbReference>
<dbReference type="FunFam" id="3.30.470.30:FF:000010">
    <property type="entry name" value="Snurportin-1"/>
    <property type="match status" value="1"/>
</dbReference>
<dbReference type="Gene3D" id="3.30.470.30">
    <property type="entry name" value="DNA ligase/mRNA capping enzyme"/>
    <property type="match status" value="1"/>
</dbReference>
<dbReference type="InterPro" id="IPR002652">
    <property type="entry name" value="Importin-a_IBB"/>
</dbReference>
<dbReference type="InterPro" id="IPR017336">
    <property type="entry name" value="Snurportin-1"/>
</dbReference>
<dbReference type="InterPro" id="IPR024721">
    <property type="entry name" value="Snurportin-1_N"/>
</dbReference>
<dbReference type="InterPro" id="IPR047857">
    <property type="entry name" value="Snurportin1_C"/>
</dbReference>
<dbReference type="PANTHER" id="PTHR13403:SF6">
    <property type="entry name" value="SNURPORTIN-1"/>
    <property type="match status" value="1"/>
</dbReference>
<dbReference type="PANTHER" id="PTHR13403">
    <property type="entry name" value="SNURPORTIN1 RNUT1 PROTEIN RNA, U TRANSPORTER 1"/>
    <property type="match status" value="1"/>
</dbReference>
<dbReference type="Pfam" id="PF11538">
    <property type="entry name" value="Snurportin1"/>
    <property type="match status" value="1"/>
</dbReference>
<dbReference type="Pfam" id="PF21974">
    <property type="entry name" value="SPN1_m3Gcap_bd"/>
    <property type="match status" value="1"/>
</dbReference>
<dbReference type="PIRSF" id="PIRSF037955">
    <property type="entry name" value="Snurportin-1"/>
    <property type="match status" value="1"/>
</dbReference>
<dbReference type="SUPFAM" id="SSF56091">
    <property type="entry name" value="DNA ligase/mRNA capping enzyme, catalytic domain"/>
    <property type="match status" value="1"/>
</dbReference>
<dbReference type="PROSITE" id="PS51214">
    <property type="entry name" value="IBB"/>
    <property type="match status" value="1"/>
</dbReference>
<keyword id="KW-0007">Acetylation</keyword>
<keyword id="KW-0963">Cytoplasm</keyword>
<keyword id="KW-0539">Nucleus</keyword>
<keyword id="KW-0597">Phosphoprotein</keyword>
<keyword id="KW-1185">Reference proteome</keyword>
<keyword id="KW-0694">RNA-binding</keyword>
<keyword id="KW-0813">Transport</keyword>
<gene>
    <name type="primary">SNUPN</name>
    <name type="synonym">RNUT1</name>
</gene>